<comment type="function">
    <text evidence="1">Catalyzes the transfer of the AMP portion of ATP to flavin mononucleotide (FMN) to produce flavin adenine dinucleotide (FAD) coenzyme.</text>
</comment>
<comment type="catalytic activity">
    <reaction evidence="1">
        <text>FMN + ATP + H(+) = FAD + diphosphate</text>
        <dbReference type="Rhea" id="RHEA:17237"/>
        <dbReference type="ChEBI" id="CHEBI:15378"/>
        <dbReference type="ChEBI" id="CHEBI:30616"/>
        <dbReference type="ChEBI" id="CHEBI:33019"/>
        <dbReference type="ChEBI" id="CHEBI:57692"/>
        <dbReference type="ChEBI" id="CHEBI:58210"/>
        <dbReference type="EC" id="2.7.7.2"/>
    </reaction>
</comment>
<comment type="cofactor">
    <cofactor evidence="1">
        <name>a divalent metal cation</name>
        <dbReference type="ChEBI" id="CHEBI:60240"/>
    </cofactor>
</comment>
<comment type="pathway">
    <text evidence="1">Cofactor biosynthesis; FAD biosynthesis; FAD from FMN: step 1/1.</text>
</comment>
<comment type="subunit">
    <text evidence="1">Homodimer.</text>
</comment>
<comment type="similarity">
    <text evidence="1">Belongs to the archaeal FAD synthase family.</text>
</comment>
<keyword id="KW-0067">ATP-binding</keyword>
<keyword id="KW-0274">FAD</keyword>
<keyword id="KW-0285">Flavoprotein</keyword>
<keyword id="KW-0288">FMN</keyword>
<keyword id="KW-0547">Nucleotide-binding</keyword>
<keyword id="KW-0548">Nucleotidyltransferase</keyword>
<keyword id="KW-0808">Transferase</keyword>
<reference key="1">
    <citation type="submission" date="2007-06" db="EMBL/GenBank/DDBJ databases">
        <title>Complete sequence of Methanococcus maripaludis C7.</title>
        <authorList>
            <consortium name="US DOE Joint Genome Institute"/>
            <person name="Copeland A."/>
            <person name="Lucas S."/>
            <person name="Lapidus A."/>
            <person name="Barry K."/>
            <person name="Glavina del Rio T."/>
            <person name="Dalin E."/>
            <person name="Tice H."/>
            <person name="Pitluck S."/>
            <person name="Clum A."/>
            <person name="Schmutz J."/>
            <person name="Larimer F."/>
            <person name="Land M."/>
            <person name="Hauser L."/>
            <person name="Kyrpides N."/>
            <person name="Anderson I."/>
            <person name="Sieprawska-Lupa M."/>
            <person name="Whitman W.B."/>
            <person name="Richardson P."/>
        </authorList>
    </citation>
    <scope>NUCLEOTIDE SEQUENCE [LARGE SCALE GENOMIC DNA]</scope>
    <source>
        <strain>C7 / ATCC BAA-1331</strain>
    </source>
</reference>
<evidence type="ECO:0000255" key="1">
    <source>
        <dbReference type="HAMAP-Rule" id="MF_02115"/>
    </source>
</evidence>
<protein>
    <recommendedName>
        <fullName evidence="1">FAD synthase</fullName>
        <ecNumber evidence="1">2.7.7.2</ecNumber>
    </recommendedName>
    <alternativeName>
        <fullName evidence="1">FMN adenylyltransferase</fullName>
    </alternativeName>
    <alternativeName>
        <fullName evidence="1">Flavin adenine dinucleotide synthase</fullName>
    </alternativeName>
</protein>
<feature type="chain" id="PRO_0000406257" description="FAD synthase">
    <location>
        <begin position="1"/>
        <end position="150"/>
    </location>
</feature>
<feature type="binding site" evidence="1">
    <location>
        <begin position="11"/>
        <end position="12"/>
    </location>
    <ligand>
        <name>ATP</name>
        <dbReference type="ChEBI" id="CHEBI:30616"/>
    </ligand>
</feature>
<feature type="binding site" evidence="1">
    <location>
        <begin position="16"/>
        <end position="19"/>
    </location>
    <ligand>
        <name>ATP</name>
        <dbReference type="ChEBI" id="CHEBI:30616"/>
    </ligand>
</feature>
<feature type="binding site" evidence="1">
    <location>
        <position position="96"/>
    </location>
    <ligand>
        <name>ATP</name>
        <dbReference type="ChEBI" id="CHEBI:30616"/>
    </ligand>
</feature>
<feature type="binding site" evidence="1">
    <location>
        <position position="124"/>
    </location>
    <ligand>
        <name>ATP</name>
        <dbReference type="ChEBI" id="CHEBI:30616"/>
    </ligand>
</feature>
<organism>
    <name type="scientific">Methanococcus maripaludis (strain C7 / ATCC BAA-1331)</name>
    <dbReference type="NCBI Taxonomy" id="426368"/>
    <lineage>
        <taxon>Archaea</taxon>
        <taxon>Methanobacteriati</taxon>
        <taxon>Methanobacteriota</taxon>
        <taxon>Methanomada group</taxon>
        <taxon>Methanococci</taxon>
        <taxon>Methanococcales</taxon>
        <taxon>Methanococcaceae</taxon>
        <taxon>Methanococcus</taxon>
    </lineage>
</organism>
<name>RIBL_METM7</name>
<accession>A6VFN4</accession>
<dbReference type="EC" id="2.7.7.2" evidence="1"/>
<dbReference type="EMBL" id="CP000745">
    <property type="protein sequence ID" value="ABR65260.1"/>
    <property type="molecule type" value="Genomic_DNA"/>
</dbReference>
<dbReference type="SMR" id="A6VFN4"/>
<dbReference type="STRING" id="426368.MmarC7_0190"/>
<dbReference type="KEGG" id="mmz:MmarC7_0190"/>
<dbReference type="eggNOG" id="arCOG01222">
    <property type="taxonomic scope" value="Archaea"/>
</dbReference>
<dbReference type="HOGENOM" id="CLU_034585_2_1_2"/>
<dbReference type="OrthoDB" id="1912at2157"/>
<dbReference type="UniPathway" id="UPA00277">
    <property type="reaction ID" value="UER00407"/>
</dbReference>
<dbReference type="GO" id="GO:0005524">
    <property type="term" value="F:ATP binding"/>
    <property type="evidence" value="ECO:0007669"/>
    <property type="project" value="UniProtKB-UniRule"/>
</dbReference>
<dbReference type="GO" id="GO:0003919">
    <property type="term" value="F:FMN adenylyltransferase activity"/>
    <property type="evidence" value="ECO:0007669"/>
    <property type="project" value="UniProtKB-UniRule"/>
</dbReference>
<dbReference type="GO" id="GO:0006747">
    <property type="term" value="P:FAD biosynthetic process"/>
    <property type="evidence" value="ECO:0007669"/>
    <property type="project" value="UniProtKB-UniRule"/>
</dbReference>
<dbReference type="GO" id="GO:0046444">
    <property type="term" value="P:FMN metabolic process"/>
    <property type="evidence" value="ECO:0007669"/>
    <property type="project" value="UniProtKB-UniRule"/>
</dbReference>
<dbReference type="Gene3D" id="3.40.50.620">
    <property type="entry name" value="HUPs"/>
    <property type="match status" value="1"/>
</dbReference>
<dbReference type="HAMAP" id="MF_02115">
    <property type="entry name" value="FAD_synth_arch"/>
    <property type="match status" value="1"/>
</dbReference>
<dbReference type="InterPro" id="IPR050385">
    <property type="entry name" value="Archaeal_FAD_synthase"/>
</dbReference>
<dbReference type="InterPro" id="IPR004821">
    <property type="entry name" value="Cyt_trans-like"/>
</dbReference>
<dbReference type="InterPro" id="IPR024902">
    <property type="entry name" value="FAD_synth_RibL"/>
</dbReference>
<dbReference type="InterPro" id="IPR014729">
    <property type="entry name" value="Rossmann-like_a/b/a_fold"/>
</dbReference>
<dbReference type="NCBIfam" id="TIGR00125">
    <property type="entry name" value="cyt_tran_rel"/>
    <property type="match status" value="1"/>
</dbReference>
<dbReference type="PANTHER" id="PTHR43793">
    <property type="entry name" value="FAD SYNTHASE"/>
    <property type="match status" value="1"/>
</dbReference>
<dbReference type="PANTHER" id="PTHR43793:SF1">
    <property type="entry name" value="FAD SYNTHASE"/>
    <property type="match status" value="1"/>
</dbReference>
<dbReference type="Pfam" id="PF01467">
    <property type="entry name" value="CTP_transf_like"/>
    <property type="match status" value="1"/>
</dbReference>
<dbReference type="SUPFAM" id="SSF52374">
    <property type="entry name" value="Nucleotidylyl transferase"/>
    <property type="match status" value="1"/>
</dbReference>
<gene>
    <name evidence="1" type="primary">ribL</name>
    <name type="ordered locus">MmarC7_0190</name>
</gene>
<proteinExistence type="inferred from homology"/>
<sequence length="150" mass="17258">MEKKIAVTAGTFDLLHPGHFNTLNFAKKHADELVVIIARDETVKKIKGRSPVIPEEQRKIMIEALKPVDRAVLGSLTNKLEPILEIRPDIIVLGPDQTTYQITELKSQLAKHFLYPEVLKVEEYVRCPFHSSFDILKEIVRRWCCKELKV</sequence>